<keyword id="KW-0903">Direct protein sequencing</keyword>
<keyword id="KW-1015">Disulfide bond</keyword>
<keyword id="KW-0325">Glycoprotein</keyword>
<keyword id="KW-0372">Hormone</keyword>
<keyword id="KW-0964">Secreted</keyword>
<sequence length="199" mass="22756">LPICPSGSVNCQVSLGELFDRAVKLSHYIHFLSSEMFNEFDERYAQGRGFITKAVNGCHNASLTTPEDKEQAQQIHHEDLLNLVLGVLRSWNDPLLHLVTEVQRIKEAPDTILWKAVEIEEQNKRLLEGMEKIVGRVQPGDTGNEVYSRWSGLPSLQLADEDSRLFAFYNLLHCGRRDSHKIDNYLKLLKCRLIHDSNC</sequence>
<dbReference type="SMR" id="P55751"/>
<dbReference type="GO" id="GO:0005615">
    <property type="term" value="C:extracellular space"/>
    <property type="evidence" value="ECO:0007669"/>
    <property type="project" value="TreeGrafter"/>
</dbReference>
<dbReference type="GO" id="GO:0005179">
    <property type="term" value="F:hormone activity"/>
    <property type="evidence" value="ECO:0007669"/>
    <property type="project" value="UniProtKB-KW"/>
</dbReference>
<dbReference type="GO" id="GO:0008284">
    <property type="term" value="P:positive regulation of cell population proliferation"/>
    <property type="evidence" value="ECO:0007669"/>
    <property type="project" value="TreeGrafter"/>
</dbReference>
<dbReference type="GO" id="GO:0046427">
    <property type="term" value="P:positive regulation of receptor signaling pathway via JAK-STAT"/>
    <property type="evidence" value="ECO:0007669"/>
    <property type="project" value="TreeGrafter"/>
</dbReference>
<dbReference type="GO" id="GO:0031667">
    <property type="term" value="P:response to nutrient levels"/>
    <property type="evidence" value="ECO:0007669"/>
    <property type="project" value="TreeGrafter"/>
</dbReference>
<dbReference type="CDD" id="cd10288">
    <property type="entry name" value="prolactin_like"/>
    <property type="match status" value="1"/>
</dbReference>
<dbReference type="FunFam" id="1.20.1250.10:FF:000003">
    <property type="entry name" value="Prolactin"/>
    <property type="match status" value="1"/>
</dbReference>
<dbReference type="Gene3D" id="1.20.1250.10">
    <property type="match status" value="1"/>
</dbReference>
<dbReference type="InterPro" id="IPR009079">
    <property type="entry name" value="4_helix_cytokine-like_core"/>
</dbReference>
<dbReference type="InterPro" id="IPR001400">
    <property type="entry name" value="Somatotropin/Prolactin"/>
</dbReference>
<dbReference type="InterPro" id="IPR018116">
    <property type="entry name" value="Somatotropin_CS"/>
</dbReference>
<dbReference type="PANTHER" id="PTHR11417:SF5">
    <property type="entry name" value="PROLACTIN"/>
    <property type="match status" value="1"/>
</dbReference>
<dbReference type="PANTHER" id="PTHR11417">
    <property type="entry name" value="SOMATOTROPIN,PROLACTIN"/>
    <property type="match status" value="1"/>
</dbReference>
<dbReference type="Pfam" id="PF00103">
    <property type="entry name" value="Hormone_1"/>
    <property type="match status" value="1"/>
</dbReference>
<dbReference type="PRINTS" id="PR00836">
    <property type="entry name" value="SOMATOTROPIN"/>
</dbReference>
<dbReference type="SUPFAM" id="SSF47266">
    <property type="entry name" value="4-helical cytokines"/>
    <property type="match status" value="1"/>
</dbReference>
<dbReference type="PROSITE" id="PS00266">
    <property type="entry name" value="SOMATOTROPIN_1"/>
    <property type="match status" value="1"/>
</dbReference>
<evidence type="ECO:0000250" key="1"/>
<evidence type="ECO:0000305" key="2"/>
<name>PRL1_ALLMI</name>
<reference key="1">
    <citation type="journal article" date="1992" name="Int. J. Pept. Protein Res.">
        <title>Isolation and characterization of glycosylated and non-glycosylated prolactins from alligator and crocodile.</title>
        <authorList>
            <person name="Noso T."/>
            <person name="Swanson P."/>
            <person name="Lance V.A."/>
            <person name="Kawauchi H."/>
        </authorList>
    </citation>
    <scope>PROTEIN SEQUENCE</scope>
    <source>
        <tissue>Pituitary</tissue>
    </source>
</reference>
<comment type="subcellular location">
    <subcellularLocation>
        <location>Secreted</location>
    </subcellularLocation>
</comment>
<comment type="PTM">
    <text>Glycosylated.</text>
</comment>
<comment type="similarity">
    <text evidence="2">Belongs to the somatotropin/prolactin family.</text>
</comment>
<proteinExistence type="evidence at protein level"/>
<organism>
    <name type="scientific">Alligator mississippiensis</name>
    <name type="common">American alligator</name>
    <dbReference type="NCBI Taxonomy" id="8496"/>
    <lineage>
        <taxon>Eukaryota</taxon>
        <taxon>Metazoa</taxon>
        <taxon>Chordata</taxon>
        <taxon>Craniata</taxon>
        <taxon>Vertebrata</taxon>
        <taxon>Euteleostomi</taxon>
        <taxon>Archelosauria</taxon>
        <taxon>Archosauria</taxon>
        <taxon>Crocodylia</taxon>
        <taxon>Alligatoridae</taxon>
        <taxon>Alligatorinae</taxon>
        <taxon>Alligator</taxon>
    </lineage>
</organism>
<accession>P55751</accession>
<protein>
    <recommendedName>
        <fullName>Prolactin-1</fullName>
    </recommendedName>
    <alternativeName>
        <fullName>Prolactin I</fullName>
        <shortName>PRL-I</shortName>
    </alternativeName>
</protein>
<feature type="chain" id="PRO_0000181321" description="Prolactin-1">
    <location>
        <begin position="1"/>
        <end position="199"/>
    </location>
</feature>
<feature type="glycosylation site" description="N-linked (GlcNAc...) asparagine">
    <location>
        <position position="60"/>
    </location>
</feature>
<feature type="disulfide bond" evidence="1">
    <location>
        <begin position="4"/>
        <end position="11"/>
    </location>
</feature>
<feature type="disulfide bond" evidence="1">
    <location>
        <begin position="58"/>
        <end position="174"/>
    </location>
</feature>
<feature type="disulfide bond" evidence="1">
    <location>
        <begin position="191"/>
        <end position="199"/>
    </location>
</feature>